<accession>Q256D6</accession>
<name>LIPA_CHLFF</name>
<proteinExistence type="inferred from homology"/>
<comment type="function">
    <text evidence="1">Catalyzes the radical-mediated insertion of two sulfur atoms into the C-6 and C-8 positions of the octanoyl moiety bound to the lipoyl domains of lipoate-dependent enzymes, thereby converting the octanoylated domains into lipoylated derivatives.</text>
</comment>
<comment type="catalytic activity">
    <reaction evidence="1">
        <text>[[Fe-S] cluster scaffold protein carrying a second [4Fe-4S](2+) cluster] + N(6)-octanoyl-L-lysyl-[protein] + 2 oxidized [2Fe-2S]-[ferredoxin] + 2 S-adenosyl-L-methionine + 4 H(+) = [[Fe-S] cluster scaffold protein] + N(6)-[(R)-dihydrolipoyl]-L-lysyl-[protein] + 4 Fe(3+) + 2 hydrogen sulfide + 2 5'-deoxyadenosine + 2 L-methionine + 2 reduced [2Fe-2S]-[ferredoxin]</text>
        <dbReference type="Rhea" id="RHEA:16585"/>
        <dbReference type="Rhea" id="RHEA-COMP:9928"/>
        <dbReference type="Rhea" id="RHEA-COMP:10000"/>
        <dbReference type="Rhea" id="RHEA-COMP:10001"/>
        <dbReference type="Rhea" id="RHEA-COMP:10475"/>
        <dbReference type="Rhea" id="RHEA-COMP:14568"/>
        <dbReference type="Rhea" id="RHEA-COMP:14569"/>
        <dbReference type="ChEBI" id="CHEBI:15378"/>
        <dbReference type="ChEBI" id="CHEBI:17319"/>
        <dbReference type="ChEBI" id="CHEBI:29034"/>
        <dbReference type="ChEBI" id="CHEBI:29919"/>
        <dbReference type="ChEBI" id="CHEBI:33722"/>
        <dbReference type="ChEBI" id="CHEBI:33737"/>
        <dbReference type="ChEBI" id="CHEBI:33738"/>
        <dbReference type="ChEBI" id="CHEBI:57844"/>
        <dbReference type="ChEBI" id="CHEBI:59789"/>
        <dbReference type="ChEBI" id="CHEBI:78809"/>
        <dbReference type="ChEBI" id="CHEBI:83100"/>
        <dbReference type="EC" id="2.8.1.8"/>
    </reaction>
</comment>
<comment type="cofactor">
    <cofactor evidence="1">
        <name>[4Fe-4S] cluster</name>
        <dbReference type="ChEBI" id="CHEBI:49883"/>
    </cofactor>
    <text evidence="1">Binds 2 [4Fe-4S] clusters per subunit. One cluster is coordinated with 3 cysteines and an exchangeable S-adenosyl-L-methionine.</text>
</comment>
<comment type="pathway">
    <text evidence="1">Protein modification; protein lipoylation via endogenous pathway; protein N(6)-(lipoyl)lysine from octanoyl-[acyl-carrier-protein]: step 2/2.</text>
</comment>
<comment type="subcellular location">
    <subcellularLocation>
        <location evidence="1">Cytoplasm</location>
    </subcellularLocation>
</comment>
<comment type="similarity">
    <text evidence="1">Belongs to the radical SAM superfamily. Lipoyl synthase family.</text>
</comment>
<organism>
    <name type="scientific">Chlamydia felis (strain Fe/C-56)</name>
    <name type="common">Chlamydophila felis</name>
    <dbReference type="NCBI Taxonomy" id="264202"/>
    <lineage>
        <taxon>Bacteria</taxon>
        <taxon>Pseudomonadati</taxon>
        <taxon>Chlamydiota</taxon>
        <taxon>Chlamydiia</taxon>
        <taxon>Chlamydiales</taxon>
        <taxon>Chlamydiaceae</taxon>
        <taxon>Chlamydia/Chlamydophila group</taxon>
        <taxon>Chlamydia</taxon>
    </lineage>
</organism>
<evidence type="ECO:0000255" key="1">
    <source>
        <dbReference type="HAMAP-Rule" id="MF_00206"/>
    </source>
</evidence>
<evidence type="ECO:0000255" key="2">
    <source>
        <dbReference type="PROSITE-ProRule" id="PRU01266"/>
    </source>
</evidence>
<evidence type="ECO:0000256" key="3">
    <source>
        <dbReference type="SAM" id="MobiDB-lite"/>
    </source>
</evidence>
<gene>
    <name evidence="1" type="primary">lipA</name>
    <name type="ordered locus">CF0080</name>
</gene>
<reference key="1">
    <citation type="journal article" date="2006" name="DNA Res.">
        <title>Genome sequence of the cat pathogen, Chlamydophila felis.</title>
        <authorList>
            <person name="Azuma Y."/>
            <person name="Hirakawa H."/>
            <person name="Yamashita A."/>
            <person name="Cai Y."/>
            <person name="Rahman M.A."/>
            <person name="Suzuki H."/>
            <person name="Mitaku S."/>
            <person name="Toh H."/>
            <person name="Goto S."/>
            <person name="Murakami T."/>
            <person name="Sugi K."/>
            <person name="Hayashi H."/>
            <person name="Fukushi H."/>
            <person name="Hattori M."/>
            <person name="Kuhara S."/>
            <person name="Shirai M."/>
        </authorList>
    </citation>
    <scope>NUCLEOTIDE SEQUENCE [LARGE SCALE GENOMIC DNA]</scope>
    <source>
        <strain>Fe/C-56</strain>
    </source>
</reference>
<sequence>MNEAPAEKQKPQQGKRFSERLPQWLRQVLPRGSVFTHTDATLKRTGLATVCEEALCPNRTHCWSRKTATYLALGDTCSRRCGFCNIDFSKNPLPPDPEEPQKIAESAKALQLKHIVLTMVARDDLEDGGASYLARIIHTLHQELPESTIEVLASDFQGNVDALHVLLDSGLTIYNHNVETVERLTPVVRHKATYRRSLFMLEQAAVYLPNLKIKSGIMVGLGEQESEVKQTLKDLADHGVRIVTIGQYLRPSRLHIPVKNYVTPETFDYYRSVGESLGLFVYAGPFVRSSFNADMVLHNLQDKQSEIAKVPR</sequence>
<dbReference type="EC" id="2.8.1.8" evidence="1"/>
<dbReference type="EMBL" id="AP006861">
    <property type="protein sequence ID" value="BAE80852.1"/>
    <property type="molecule type" value="Genomic_DNA"/>
</dbReference>
<dbReference type="RefSeq" id="WP_011457637.1">
    <property type="nucleotide sequence ID" value="NC_007899.1"/>
</dbReference>
<dbReference type="SMR" id="Q256D6"/>
<dbReference type="STRING" id="264202.CF0080"/>
<dbReference type="KEGG" id="cfe:CF0080"/>
<dbReference type="eggNOG" id="COG0320">
    <property type="taxonomic scope" value="Bacteria"/>
</dbReference>
<dbReference type="HOGENOM" id="CLU_033144_2_1_0"/>
<dbReference type="OrthoDB" id="9787898at2"/>
<dbReference type="UniPathway" id="UPA00538">
    <property type="reaction ID" value="UER00593"/>
</dbReference>
<dbReference type="Proteomes" id="UP000001260">
    <property type="component" value="Chromosome"/>
</dbReference>
<dbReference type="GO" id="GO:0005737">
    <property type="term" value="C:cytoplasm"/>
    <property type="evidence" value="ECO:0007669"/>
    <property type="project" value="UniProtKB-SubCell"/>
</dbReference>
<dbReference type="GO" id="GO:0051539">
    <property type="term" value="F:4 iron, 4 sulfur cluster binding"/>
    <property type="evidence" value="ECO:0007669"/>
    <property type="project" value="UniProtKB-UniRule"/>
</dbReference>
<dbReference type="GO" id="GO:0016992">
    <property type="term" value="F:lipoate synthase activity"/>
    <property type="evidence" value="ECO:0007669"/>
    <property type="project" value="UniProtKB-UniRule"/>
</dbReference>
<dbReference type="GO" id="GO:0046872">
    <property type="term" value="F:metal ion binding"/>
    <property type="evidence" value="ECO:0007669"/>
    <property type="project" value="UniProtKB-KW"/>
</dbReference>
<dbReference type="CDD" id="cd01335">
    <property type="entry name" value="Radical_SAM"/>
    <property type="match status" value="1"/>
</dbReference>
<dbReference type="FunFam" id="3.20.20.70:FF:000186">
    <property type="entry name" value="Lipoyl synthase"/>
    <property type="match status" value="1"/>
</dbReference>
<dbReference type="Gene3D" id="3.20.20.70">
    <property type="entry name" value="Aldolase class I"/>
    <property type="match status" value="1"/>
</dbReference>
<dbReference type="HAMAP" id="MF_00206">
    <property type="entry name" value="Lipoyl_synth"/>
    <property type="match status" value="1"/>
</dbReference>
<dbReference type="InterPro" id="IPR013785">
    <property type="entry name" value="Aldolase_TIM"/>
</dbReference>
<dbReference type="InterPro" id="IPR006638">
    <property type="entry name" value="Elp3/MiaA/NifB-like_rSAM"/>
</dbReference>
<dbReference type="InterPro" id="IPR031691">
    <property type="entry name" value="LIAS_N"/>
</dbReference>
<dbReference type="InterPro" id="IPR003698">
    <property type="entry name" value="Lipoyl_synth"/>
</dbReference>
<dbReference type="InterPro" id="IPR007197">
    <property type="entry name" value="rSAM"/>
</dbReference>
<dbReference type="NCBIfam" id="TIGR00510">
    <property type="entry name" value="lipA"/>
    <property type="match status" value="1"/>
</dbReference>
<dbReference type="NCBIfam" id="NF004019">
    <property type="entry name" value="PRK05481.1"/>
    <property type="match status" value="1"/>
</dbReference>
<dbReference type="NCBIfam" id="NF009544">
    <property type="entry name" value="PRK12928.1"/>
    <property type="match status" value="1"/>
</dbReference>
<dbReference type="PANTHER" id="PTHR10949">
    <property type="entry name" value="LIPOYL SYNTHASE"/>
    <property type="match status" value="1"/>
</dbReference>
<dbReference type="PANTHER" id="PTHR10949:SF0">
    <property type="entry name" value="LIPOYL SYNTHASE, MITOCHONDRIAL"/>
    <property type="match status" value="1"/>
</dbReference>
<dbReference type="Pfam" id="PF16881">
    <property type="entry name" value="LIAS_N"/>
    <property type="match status" value="1"/>
</dbReference>
<dbReference type="Pfam" id="PF04055">
    <property type="entry name" value="Radical_SAM"/>
    <property type="match status" value="1"/>
</dbReference>
<dbReference type="PIRSF" id="PIRSF005963">
    <property type="entry name" value="Lipoyl_synth"/>
    <property type="match status" value="1"/>
</dbReference>
<dbReference type="SFLD" id="SFLDF00271">
    <property type="entry name" value="lipoyl_synthase"/>
    <property type="match status" value="1"/>
</dbReference>
<dbReference type="SFLD" id="SFLDG01058">
    <property type="entry name" value="lipoyl_synthase_like"/>
    <property type="match status" value="1"/>
</dbReference>
<dbReference type="SMART" id="SM00729">
    <property type="entry name" value="Elp3"/>
    <property type="match status" value="1"/>
</dbReference>
<dbReference type="SUPFAM" id="SSF102114">
    <property type="entry name" value="Radical SAM enzymes"/>
    <property type="match status" value="1"/>
</dbReference>
<dbReference type="PROSITE" id="PS51918">
    <property type="entry name" value="RADICAL_SAM"/>
    <property type="match status" value="1"/>
</dbReference>
<protein>
    <recommendedName>
        <fullName evidence="1">Lipoyl synthase</fullName>
        <ecNumber evidence="1">2.8.1.8</ecNumber>
    </recommendedName>
    <alternativeName>
        <fullName evidence="1">Lip-syn</fullName>
        <shortName evidence="1">LS</shortName>
    </alternativeName>
    <alternativeName>
        <fullName evidence="1">Lipoate synthase</fullName>
    </alternativeName>
    <alternativeName>
        <fullName evidence="1">Lipoic acid synthase</fullName>
    </alternativeName>
    <alternativeName>
        <fullName evidence="1">Sulfur insertion protein LipA</fullName>
    </alternativeName>
</protein>
<keyword id="KW-0004">4Fe-4S</keyword>
<keyword id="KW-0963">Cytoplasm</keyword>
<keyword id="KW-0408">Iron</keyword>
<keyword id="KW-0411">Iron-sulfur</keyword>
<keyword id="KW-0479">Metal-binding</keyword>
<keyword id="KW-0949">S-adenosyl-L-methionine</keyword>
<keyword id="KW-0808">Transferase</keyword>
<feature type="chain" id="PRO_1000012207" description="Lipoyl synthase">
    <location>
        <begin position="1"/>
        <end position="312"/>
    </location>
</feature>
<feature type="domain" description="Radical SAM core" evidence="2">
    <location>
        <begin position="63"/>
        <end position="280"/>
    </location>
</feature>
<feature type="region of interest" description="Disordered" evidence="3">
    <location>
        <begin position="1"/>
        <end position="20"/>
    </location>
</feature>
<feature type="compositionally biased region" description="Basic and acidic residues" evidence="3">
    <location>
        <begin position="1"/>
        <end position="10"/>
    </location>
</feature>
<feature type="binding site" evidence="1">
    <location>
        <position position="51"/>
    </location>
    <ligand>
        <name>[4Fe-4S] cluster</name>
        <dbReference type="ChEBI" id="CHEBI:49883"/>
        <label>1</label>
    </ligand>
</feature>
<feature type="binding site" evidence="1">
    <location>
        <position position="56"/>
    </location>
    <ligand>
        <name>[4Fe-4S] cluster</name>
        <dbReference type="ChEBI" id="CHEBI:49883"/>
        <label>1</label>
    </ligand>
</feature>
<feature type="binding site" evidence="1">
    <location>
        <position position="62"/>
    </location>
    <ligand>
        <name>[4Fe-4S] cluster</name>
        <dbReference type="ChEBI" id="CHEBI:49883"/>
        <label>1</label>
    </ligand>
</feature>
<feature type="binding site" evidence="1">
    <location>
        <position position="77"/>
    </location>
    <ligand>
        <name>[4Fe-4S] cluster</name>
        <dbReference type="ChEBI" id="CHEBI:49883"/>
        <label>2</label>
        <note>4Fe-4S-S-AdoMet</note>
    </ligand>
</feature>
<feature type="binding site" evidence="1">
    <location>
        <position position="81"/>
    </location>
    <ligand>
        <name>[4Fe-4S] cluster</name>
        <dbReference type="ChEBI" id="CHEBI:49883"/>
        <label>2</label>
        <note>4Fe-4S-S-AdoMet</note>
    </ligand>
</feature>
<feature type="binding site" evidence="1">
    <location>
        <position position="84"/>
    </location>
    <ligand>
        <name>[4Fe-4S] cluster</name>
        <dbReference type="ChEBI" id="CHEBI:49883"/>
        <label>2</label>
        <note>4Fe-4S-S-AdoMet</note>
    </ligand>
</feature>
<feature type="binding site" evidence="1">
    <location>
        <position position="290"/>
    </location>
    <ligand>
        <name>[4Fe-4S] cluster</name>
        <dbReference type="ChEBI" id="CHEBI:49883"/>
        <label>1</label>
    </ligand>
</feature>